<sequence>MTIGVVGRKCGMTRVFTEDGVSIPVTVIEIEPNRVTQFKNEESDGYRAVQVTVGERRASRVTKAQAGHFAKANVAAGRGVWEFRLEGEEFQVGDQINAEIFQAGQLVDVTGQSKGKGFAGTIKRWNFRGQDNTHGNSVSHRVPGSIGQCQTPGRVFKGKKMSGHMGAERVTVQSLEIVRVDAERNLLLVKGAVPGATGGDVFVRPAVKARG</sequence>
<evidence type="ECO:0000255" key="1">
    <source>
        <dbReference type="HAMAP-Rule" id="MF_01325"/>
    </source>
</evidence>
<evidence type="ECO:0000305" key="2"/>
<name>RL3_STUS1</name>
<dbReference type="EMBL" id="CP000304">
    <property type="protein sequence ID" value="ABP78481.1"/>
    <property type="molecule type" value="Genomic_DNA"/>
</dbReference>
<dbReference type="RefSeq" id="WP_011911987.1">
    <property type="nucleotide sequence ID" value="NC_009434.1"/>
</dbReference>
<dbReference type="SMR" id="A4VHN0"/>
<dbReference type="GeneID" id="66819926"/>
<dbReference type="KEGG" id="psa:PST_0784"/>
<dbReference type="eggNOG" id="COG0087">
    <property type="taxonomic scope" value="Bacteria"/>
</dbReference>
<dbReference type="HOGENOM" id="CLU_044142_4_1_6"/>
<dbReference type="Proteomes" id="UP000000233">
    <property type="component" value="Chromosome"/>
</dbReference>
<dbReference type="GO" id="GO:0022625">
    <property type="term" value="C:cytosolic large ribosomal subunit"/>
    <property type="evidence" value="ECO:0007669"/>
    <property type="project" value="TreeGrafter"/>
</dbReference>
<dbReference type="GO" id="GO:0019843">
    <property type="term" value="F:rRNA binding"/>
    <property type="evidence" value="ECO:0007669"/>
    <property type="project" value="UniProtKB-UniRule"/>
</dbReference>
<dbReference type="GO" id="GO:0003735">
    <property type="term" value="F:structural constituent of ribosome"/>
    <property type="evidence" value="ECO:0007669"/>
    <property type="project" value="InterPro"/>
</dbReference>
<dbReference type="GO" id="GO:0006412">
    <property type="term" value="P:translation"/>
    <property type="evidence" value="ECO:0007669"/>
    <property type="project" value="UniProtKB-UniRule"/>
</dbReference>
<dbReference type="FunFam" id="2.40.30.10:FF:000004">
    <property type="entry name" value="50S ribosomal protein L3"/>
    <property type="match status" value="1"/>
</dbReference>
<dbReference type="FunFam" id="3.30.160.810:FF:000001">
    <property type="entry name" value="50S ribosomal protein L3"/>
    <property type="match status" value="1"/>
</dbReference>
<dbReference type="Gene3D" id="3.30.160.810">
    <property type="match status" value="1"/>
</dbReference>
<dbReference type="Gene3D" id="2.40.30.10">
    <property type="entry name" value="Translation factors"/>
    <property type="match status" value="1"/>
</dbReference>
<dbReference type="HAMAP" id="MF_01325_B">
    <property type="entry name" value="Ribosomal_uL3_B"/>
    <property type="match status" value="1"/>
</dbReference>
<dbReference type="InterPro" id="IPR000597">
    <property type="entry name" value="Ribosomal_uL3"/>
</dbReference>
<dbReference type="InterPro" id="IPR019927">
    <property type="entry name" value="Ribosomal_uL3_bac/org-type"/>
</dbReference>
<dbReference type="InterPro" id="IPR019926">
    <property type="entry name" value="Ribosomal_uL3_CS"/>
</dbReference>
<dbReference type="InterPro" id="IPR009000">
    <property type="entry name" value="Transl_B-barrel_sf"/>
</dbReference>
<dbReference type="NCBIfam" id="TIGR03625">
    <property type="entry name" value="L3_bact"/>
    <property type="match status" value="1"/>
</dbReference>
<dbReference type="PANTHER" id="PTHR11229">
    <property type="entry name" value="50S RIBOSOMAL PROTEIN L3"/>
    <property type="match status" value="1"/>
</dbReference>
<dbReference type="PANTHER" id="PTHR11229:SF16">
    <property type="entry name" value="LARGE RIBOSOMAL SUBUNIT PROTEIN UL3C"/>
    <property type="match status" value="1"/>
</dbReference>
<dbReference type="Pfam" id="PF00297">
    <property type="entry name" value="Ribosomal_L3"/>
    <property type="match status" value="1"/>
</dbReference>
<dbReference type="SUPFAM" id="SSF50447">
    <property type="entry name" value="Translation proteins"/>
    <property type="match status" value="1"/>
</dbReference>
<dbReference type="PROSITE" id="PS00474">
    <property type="entry name" value="RIBOSOMAL_L3"/>
    <property type="match status" value="1"/>
</dbReference>
<accession>A4VHN0</accession>
<protein>
    <recommendedName>
        <fullName evidence="1">Large ribosomal subunit protein uL3</fullName>
    </recommendedName>
    <alternativeName>
        <fullName evidence="2">50S ribosomal protein L3</fullName>
    </alternativeName>
</protein>
<gene>
    <name evidence="1" type="primary">rplC</name>
    <name type="ordered locus">PST_0784</name>
</gene>
<reference key="1">
    <citation type="journal article" date="2008" name="Proc. Natl. Acad. Sci. U.S.A.">
        <title>Nitrogen fixation island and rhizosphere competence traits in the genome of root-associated Pseudomonas stutzeri A1501.</title>
        <authorList>
            <person name="Yan Y."/>
            <person name="Yang J."/>
            <person name="Dou Y."/>
            <person name="Chen M."/>
            <person name="Ping S."/>
            <person name="Peng J."/>
            <person name="Lu W."/>
            <person name="Zhang W."/>
            <person name="Yao Z."/>
            <person name="Li H."/>
            <person name="Liu W."/>
            <person name="He S."/>
            <person name="Geng L."/>
            <person name="Zhang X."/>
            <person name="Yang F."/>
            <person name="Yu H."/>
            <person name="Zhan Y."/>
            <person name="Li D."/>
            <person name="Lin Z."/>
            <person name="Wang Y."/>
            <person name="Elmerich C."/>
            <person name="Lin M."/>
            <person name="Jin Q."/>
        </authorList>
    </citation>
    <scope>NUCLEOTIDE SEQUENCE [LARGE SCALE GENOMIC DNA]</scope>
    <source>
        <strain>A1501</strain>
    </source>
</reference>
<keyword id="KW-0488">Methylation</keyword>
<keyword id="KW-1185">Reference proteome</keyword>
<keyword id="KW-0687">Ribonucleoprotein</keyword>
<keyword id="KW-0689">Ribosomal protein</keyword>
<keyword id="KW-0694">RNA-binding</keyword>
<keyword id="KW-0699">rRNA-binding</keyword>
<organism>
    <name type="scientific">Stutzerimonas stutzeri (strain A1501)</name>
    <name type="common">Pseudomonas stutzeri</name>
    <dbReference type="NCBI Taxonomy" id="379731"/>
    <lineage>
        <taxon>Bacteria</taxon>
        <taxon>Pseudomonadati</taxon>
        <taxon>Pseudomonadota</taxon>
        <taxon>Gammaproteobacteria</taxon>
        <taxon>Pseudomonadales</taxon>
        <taxon>Pseudomonadaceae</taxon>
        <taxon>Stutzerimonas</taxon>
    </lineage>
</organism>
<proteinExistence type="inferred from homology"/>
<feature type="chain" id="PRO_1000052117" description="Large ribosomal subunit protein uL3">
    <location>
        <begin position="1"/>
        <end position="211"/>
    </location>
</feature>
<feature type="modified residue" description="N5-methylglutamine" evidence="1">
    <location>
        <position position="150"/>
    </location>
</feature>
<comment type="function">
    <text evidence="1">One of the primary rRNA binding proteins, it binds directly near the 3'-end of the 23S rRNA, where it nucleates assembly of the 50S subunit.</text>
</comment>
<comment type="subunit">
    <text evidence="1">Part of the 50S ribosomal subunit. Forms a cluster with proteins L14 and L19.</text>
</comment>
<comment type="PTM">
    <text evidence="1">Methylated by PrmB.</text>
</comment>
<comment type="similarity">
    <text evidence="1">Belongs to the universal ribosomal protein uL3 family.</text>
</comment>